<gene>
    <name evidence="8 9" type="primary">pbo-5</name>
    <name evidence="8" type="synonym">lgc-2</name>
    <name type="ORF">Y44A6E.1</name>
</gene>
<name>PBO5_CAEEL</name>
<dbReference type="EMBL" id="AL033511">
    <property type="protein sequence ID" value="CAH19091.1"/>
    <property type="molecule type" value="Genomic_DNA"/>
</dbReference>
<dbReference type="EMBL" id="AL033515">
    <property type="protein sequence ID" value="CAH19091.1"/>
    <property type="status" value="JOINED"/>
    <property type="molecule type" value="Genomic_DNA"/>
</dbReference>
<dbReference type="EMBL" id="Z81512">
    <property type="protein sequence ID" value="CAH19091.1"/>
    <property type="status" value="JOINED"/>
    <property type="molecule type" value="Genomic_DNA"/>
</dbReference>
<dbReference type="EMBL" id="AL033511">
    <property type="protein sequence ID" value="CAA22072.2"/>
    <property type="molecule type" value="Genomic_DNA"/>
</dbReference>
<dbReference type="EMBL" id="AL033515">
    <property type="protein sequence ID" value="CAA22072.2"/>
    <property type="status" value="JOINED"/>
    <property type="molecule type" value="Genomic_DNA"/>
</dbReference>
<dbReference type="EMBL" id="Z81512">
    <property type="protein sequence ID" value="CAA22072.2"/>
    <property type="status" value="JOINED"/>
    <property type="molecule type" value="Genomic_DNA"/>
</dbReference>
<dbReference type="RefSeq" id="NP_001024239.1">
    <molecule id="G5ECT0-2"/>
    <property type="nucleotide sequence ID" value="NM_001029068.5"/>
</dbReference>
<dbReference type="RefSeq" id="NP_001024240.1">
    <molecule id="G5ECT0-1"/>
    <property type="nucleotide sequence ID" value="NM_001029069.7"/>
</dbReference>
<dbReference type="SMR" id="G5ECT0"/>
<dbReference type="FunCoup" id="G5ECT0">
    <property type="interactions" value="74"/>
</dbReference>
<dbReference type="STRING" id="6239.Y44A6E.1b.1"/>
<dbReference type="PaxDb" id="6239-Y44A6E.1b"/>
<dbReference type="PeptideAtlas" id="G5ECT0"/>
<dbReference type="EnsemblMetazoa" id="Y44A6E.1a.1">
    <molecule id="G5ECT0-2"/>
    <property type="protein sequence ID" value="Y44A6E.1a.1"/>
    <property type="gene ID" value="WBGene00012857"/>
</dbReference>
<dbReference type="EnsemblMetazoa" id="Y44A6E.1b.1">
    <molecule id="G5ECT0-1"/>
    <property type="protein sequence ID" value="Y44A6E.1b.1"/>
    <property type="gene ID" value="WBGene00012857"/>
</dbReference>
<dbReference type="GeneID" id="189903"/>
<dbReference type="KEGG" id="cel:CELE_Y44A6E.1"/>
<dbReference type="AGR" id="WB:WBGene00012857"/>
<dbReference type="CTD" id="189903"/>
<dbReference type="WormBase" id="Y44A6E.1a">
    <molecule id="G5ECT0-2"/>
    <property type="protein sequence ID" value="CE32021"/>
    <property type="gene ID" value="WBGene00012857"/>
    <property type="gene designation" value="pbo-5"/>
</dbReference>
<dbReference type="WormBase" id="Y44A6E.1b">
    <molecule id="G5ECT0-1"/>
    <property type="protein sequence ID" value="CE37284"/>
    <property type="gene ID" value="WBGene00012857"/>
    <property type="gene designation" value="pbo-5"/>
</dbReference>
<dbReference type="eggNOG" id="KOG3645">
    <property type="taxonomic scope" value="Eukaryota"/>
</dbReference>
<dbReference type="GeneTree" id="ENSGT00940000173136"/>
<dbReference type="HOGENOM" id="CLU_518985_0_0_1"/>
<dbReference type="InParanoid" id="G5ECT0"/>
<dbReference type="OMA" id="SYIMCAI"/>
<dbReference type="OrthoDB" id="202825at2759"/>
<dbReference type="PhylomeDB" id="G5ECT0"/>
<dbReference type="PRO" id="PR:G5ECT0"/>
<dbReference type="Proteomes" id="UP000001940">
    <property type="component" value="Chromosome V"/>
</dbReference>
<dbReference type="Bgee" id="WBGene00012857">
    <property type="expression patterns" value="Expressed in larva and 3 other cell types or tissues"/>
</dbReference>
<dbReference type="GO" id="GO:0005892">
    <property type="term" value="C:acetylcholine-gated channel complex"/>
    <property type="evidence" value="ECO:0000318"/>
    <property type="project" value="GO_Central"/>
</dbReference>
<dbReference type="GO" id="GO:0043005">
    <property type="term" value="C:neuron projection"/>
    <property type="evidence" value="ECO:0000318"/>
    <property type="project" value="GO_Central"/>
</dbReference>
<dbReference type="GO" id="GO:0005886">
    <property type="term" value="C:plasma membrane"/>
    <property type="evidence" value="ECO:0000318"/>
    <property type="project" value="GO_Central"/>
</dbReference>
<dbReference type="GO" id="GO:0098794">
    <property type="term" value="C:postsynapse"/>
    <property type="evidence" value="ECO:0007669"/>
    <property type="project" value="GOC"/>
</dbReference>
<dbReference type="GO" id="GO:0045202">
    <property type="term" value="C:synapse"/>
    <property type="evidence" value="ECO:0000318"/>
    <property type="project" value="GO_Central"/>
</dbReference>
<dbReference type="GO" id="GO:0005231">
    <property type="term" value="F:excitatory extracellular ligand-gated monoatomic ion channel activity"/>
    <property type="evidence" value="ECO:0000318"/>
    <property type="project" value="GO_Central"/>
</dbReference>
<dbReference type="GO" id="GO:0005230">
    <property type="term" value="F:extracellular ligand-gated monoatomic ion channel activity"/>
    <property type="evidence" value="ECO:0000314"/>
    <property type="project" value="WormBase"/>
</dbReference>
<dbReference type="GO" id="GO:0004888">
    <property type="term" value="F:transmembrane signaling receptor activity"/>
    <property type="evidence" value="ECO:0007669"/>
    <property type="project" value="InterPro"/>
</dbReference>
<dbReference type="GO" id="GO:1904315">
    <property type="term" value="F:transmitter-gated monoatomic ion channel activity involved in regulation of postsynaptic membrane potential"/>
    <property type="evidence" value="ECO:0000318"/>
    <property type="project" value="GO_Central"/>
</dbReference>
<dbReference type="GO" id="GO:0007268">
    <property type="term" value="P:chemical synaptic transmission"/>
    <property type="evidence" value="ECO:0000318"/>
    <property type="project" value="GO_Central"/>
</dbReference>
<dbReference type="GO" id="GO:0030421">
    <property type="term" value="P:defecation"/>
    <property type="evidence" value="ECO:0000315"/>
    <property type="project" value="WormBase"/>
</dbReference>
<dbReference type="GO" id="GO:0010877">
    <property type="term" value="P:lipid transport involved in lipid storage"/>
    <property type="evidence" value="ECO:0000315"/>
    <property type="project" value="UniProtKB"/>
</dbReference>
<dbReference type="GO" id="GO:0034220">
    <property type="term" value="P:monoatomic ion transmembrane transport"/>
    <property type="evidence" value="ECO:0000318"/>
    <property type="project" value="GO_Central"/>
</dbReference>
<dbReference type="GO" id="GO:1904731">
    <property type="term" value="P:positive regulation of intestinal lipid absorption"/>
    <property type="evidence" value="ECO:0000315"/>
    <property type="project" value="UniProtKB"/>
</dbReference>
<dbReference type="GO" id="GO:0045989">
    <property type="term" value="P:positive regulation of striated muscle contraction"/>
    <property type="evidence" value="ECO:0000315"/>
    <property type="project" value="WormBase"/>
</dbReference>
<dbReference type="GO" id="GO:0042391">
    <property type="term" value="P:regulation of membrane potential"/>
    <property type="evidence" value="ECO:0000318"/>
    <property type="project" value="GO_Central"/>
</dbReference>
<dbReference type="CDD" id="cd18989">
    <property type="entry name" value="LGIC_ECD_cation"/>
    <property type="match status" value="1"/>
</dbReference>
<dbReference type="CDD" id="cd19051">
    <property type="entry name" value="LGIC_TM_cation"/>
    <property type="match status" value="1"/>
</dbReference>
<dbReference type="FunFam" id="1.20.58.390:FF:000081">
    <property type="entry name" value="Proton-gated ion channel subunit pbo-5"/>
    <property type="match status" value="1"/>
</dbReference>
<dbReference type="FunFam" id="2.70.170.10:FF:000055">
    <property type="entry name" value="Proton-gated ion channel subunit pbo-6"/>
    <property type="match status" value="1"/>
</dbReference>
<dbReference type="Gene3D" id="2.70.170.10">
    <property type="entry name" value="Neurotransmitter-gated ion-channel ligand-binding domain"/>
    <property type="match status" value="1"/>
</dbReference>
<dbReference type="Gene3D" id="1.20.58.390">
    <property type="entry name" value="Neurotransmitter-gated ion-channel transmembrane domain"/>
    <property type="match status" value="1"/>
</dbReference>
<dbReference type="InterPro" id="IPR006202">
    <property type="entry name" value="Neur_chan_lig-bd"/>
</dbReference>
<dbReference type="InterPro" id="IPR036734">
    <property type="entry name" value="Neur_chan_lig-bd_sf"/>
</dbReference>
<dbReference type="InterPro" id="IPR006201">
    <property type="entry name" value="Neur_channel"/>
</dbReference>
<dbReference type="InterPro" id="IPR036719">
    <property type="entry name" value="Neuro-gated_channel_TM_sf"/>
</dbReference>
<dbReference type="InterPro" id="IPR038050">
    <property type="entry name" value="Neuro_actylchol_rec"/>
</dbReference>
<dbReference type="InterPro" id="IPR006029">
    <property type="entry name" value="Neurotrans-gated_channel_TM"/>
</dbReference>
<dbReference type="InterPro" id="IPR018000">
    <property type="entry name" value="Neurotransmitter_ion_chnl_CS"/>
</dbReference>
<dbReference type="PANTHER" id="PTHR18945">
    <property type="entry name" value="NEUROTRANSMITTER GATED ION CHANNEL"/>
    <property type="match status" value="1"/>
</dbReference>
<dbReference type="Pfam" id="PF02931">
    <property type="entry name" value="Neur_chan_LBD"/>
    <property type="match status" value="1"/>
</dbReference>
<dbReference type="Pfam" id="PF02932">
    <property type="entry name" value="Neur_chan_memb"/>
    <property type="match status" value="1"/>
</dbReference>
<dbReference type="PRINTS" id="PR00252">
    <property type="entry name" value="NRIONCHANNEL"/>
</dbReference>
<dbReference type="SUPFAM" id="SSF90112">
    <property type="entry name" value="Neurotransmitter-gated ion-channel transmembrane pore"/>
    <property type="match status" value="1"/>
</dbReference>
<dbReference type="SUPFAM" id="SSF63712">
    <property type="entry name" value="Nicotinic receptor ligand binding domain-like"/>
    <property type="match status" value="1"/>
</dbReference>
<dbReference type="PROSITE" id="PS00236">
    <property type="entry name" value="NEUROTR_ION_CHANNEL"/>
    <property type="match status" value="1"/>
</dbReference>
<sequence>MTRLSILQHLLTFLILSKINATSTTESYFDSSEEAPNVLLNHLNNESEGEELTQINDTQPAFVPGSSKRLTEYLLSRHNLNAPPDGLLYVEYELELVHILGIDELKQTMTVLIYVDEHWVDPSLTWDPALFGGITKTWIPLDKIWVPDIIVFNMVKSNRLAHEDLLSAVRAPARIHYNGTIVASHPAVHTVSCEINIRHFPLDDQRCAIEIASWAYGQEKIRLHAHTDHSLEHYKRNEEWHLLNLNVSEEKYEHEGVEVSEVKFEISLKRRPLFYMVTLTFPSYIMCAISVVGLFARFSTTGEREERFTLGVTAILTMAVLSLVVSEKVPHSSTHVPLLVAYFLFNMVIVSIAAMTTGIVMKVHRLGRYGDEPSDFWMRCFLLKPVFRTSNRRKYRMNPEEPTQVILVSEAKNGEVLTKKSTELNGTVVKEIMLSSRLEALEEYIRKMVNRCETIKWELDEIDAAENIELVRRRSTNGYVRISERLDILFMFLFLSTVTIPVAVLFYLT</sequence>
<keyword id="KW-0025">Alternative splicing</keyword>
<keyword id="KW-1015">Disulfide bond</keyword>
<keyword id="KW-0407">Ion channel</keyword>
<keyword id="KW-0406">Ion transport</keyword>
<keyword id="KW-0472">Membrane</keyword>
<keyword id="KW-0675">Receptor</keyword>
<keyword id="KW-1185">Reference proteome</keyword>
<keyword id="KW-0732">Signal</keyword>
<keyword id="KW-0812">Transmembrane</keyword>
<keyword id="KW-1133">Transmembrane helix</keyword>
<keyword id="KW-0813">Transport</keyword>
<proteinExistence type="evidence at protein level"/>
<accession>G5ECT0</accession>
<accession>G5ECR4</accession>
<feature type="signal peptide" evidence="2">
    <location>
        <begin position="1"/>
        <end position="21"/>
    </location>
</feature>
<feature type="chain" id="PRO_0000424148" description="Proton-gated ion channel subunit pbo-5" evidence="2">
    <location>
        <begin position="22"/>
        <end position="509"/>
    </location>
</feature>
<feature type="topological domain" description="Extracellular" evidence="2">
    <location>
        <begin position="22"/>
        <end position="275"/>
    </location>
</feature>
<feature type="transmembrane region" description="Helical" evidence="2">
    <location>
        <begin position="276"/>
        <end position="296"/>
    </location>
</feature>
<feature type="transmembrane region" description="Helical" evidence="2">
    <location>
        <begin position="310"/>
        <end position="330"/>
    </location>
</feature>
<feature type="transmembrane region" description="Helical" evidence="2">
    <location>
        <begin position="336"/>
        <end position="356"/>
    </location>
</feature>
<feature type="topological domain" description="Cytoplasmic" evidence="2">
    <location>
        <begin position="357"/>
        <end position="487"/>
    </location>
</feature>
<feature type="transmembrane region" description="Helical" evidence="2">
    <location>
        <begin position="488"/>
        <end position="508"/>
    </location>
</feature>
<feature type="disulfide bond" evidence="1">
    <location>
        <begin position="193"/>
        <end position="207"/>
    </location>
</feature>
<feature type="splice variant" id="VSP_053336" description="In isoform a." evidence="6">
    <location>
        <begin position="155"/>
        <end position="159"/>
    </location>
</feature>
<feature type="mutagenesis site" description="In sa242; defective in posterior body wall contraction (pBoc)." evidence="3">
    <original>P</original>
    <variation>L</variation>
    <location>
        <position position="186"/>
    </location>
</feature>
<feature type="mutagenesis site" description="In ox9; defective in posterior body wall contraction (pBoc)." evidence="3">
    <original>H</original>
    <variation>Q</variation>
    <location>
        <position position="189"/>
    </location>
</feature>
<feature type="mutagenesis site" description="In ox38; defective in posterior body wall contraction (pBoc)." evidence="3">
    <original>T</original>
    <variation>I</variation>
    <location>
        <position position="309"/>
    </location>
</feature>
<feature type="mutagenesis site" description="In ox7dm; defective in posterior body wall contraction (pBoc)." evidence="3">
    <original>L</original>
    <variation>F</variation>
    <location>
        <position position="321"/>
    </location>
</feature>
<feature type="mutagenesis site" description="In ox34; defective in posterior body wall contraction (pBoc)." evidence="3">
    <original>P</original>
    <variation>L</variation>
    <location>
        <position position="330"/>
    </location>
</feature>
<feature type="mutagenesis site" description="In sa297; defective in posterior body wall contraction (pBoc)." evidence="3">
    <original>M</original>
    <variation>T</variation>
    <location>
        <position position="347"/>
    </location>
</feature>
<reference evidence="7" key="1">
    <citation type="journal article" date="2008" name="Cell">
        <title>Protons act as a transmitter for muscle contraction in C. elegans.</title>
        <authorList>
            <person name="Beg A.A."/>
            <person name="Ernstrom G.G."/>
            <person name="Nix P."/>
            <person name="Davis M.W."/>
            <person name="Jorgensen E.M."/>
        </authorList>
    </citation>
    <scope>NUCLEOTIDE SEQUENCE [MRNA] (ISOFORM A)</scope>
    <scope>FUNCTION</scope>
    <scope>SUBUNIT</scope>
    <scope>SUBCELLULAR LOCATION</scope>
    <scope>TISSUE SPECIFICITY</scope>
    <scope>DISRUPTION PHENOTYPE</scope>
    <scope>MUTAGENESIS OF PRO-186; HIS-189; THR-309; LEU-321; PRO-330 AND MET-347</scope>
    <source>
        <strain evidence="3">Bristol N2</strain>
    </source>
</reference>
<reference evidence="8" key="2">
    <citation type="journal article" date="1998" name="Science">
        <title>Genome sequence of the nematode C. elegans: a platform for investigating biology.</title>
        <authorList>
            <consortium name="The C. elegans sequencing consortium"/>
        </authorList>
    </citation>
    <scope>NUCLEOTIDE SEQUENCE [LARGE SCALE GENOMIC DNA]</scope>
    <source>
        <strain evidence="8">Bristol N2</strain>
    </source>
</reference>
<reference key="3">
    <citation type="journal article" date="2015" name="PLoS ONE">
        <title>Aberrant fat metabolism in Caenorhabditis elegans mutants with defects in the defecation motor program.</title>
        <authorList>
            <person name="Sheng M."/>
            <person name="Hosseinzadeh A."/>
            <person name="Muralidharan S.V."/>
            <person name="Gaur R."/>
            <person name="Selstam E."/>
            <person name="Tuck S."/>
        </authorList>
    </citation>
    <scope>FUNCTION</scope>
</reference>
<protein>
    <recommendedName>
        <fullName evidence="6">Proton-gated ion channel subunit pbo-5</fullName>
    </recommendedName>
    <alternativeName>
        <fullName evidence="6">PBoc defective protein pbo-5</fullName>
    </alternativeName>
</protein>
<organism>
    <name type="scientific">Caenorhabditis elegans</name>
    <dbReference type="NCBI Taxonomy" id="6239"/>
    <lineage>
        <taxon>Eukaryota</taxon>
        <taxon>Metazoa</taxon>
        <taxon>Ecdysozoa</taxon>
        <taxon>Nematoda</taxon>
        <taxon>Chromadorea</taxon>
        <taxon>Rhabditida</taxon>
        <taxon>Rhabditina</taxon>
        <taxon>Rhabditomorpha</taxon>
        <taxon>Rhabditoidea</taxon>
        <taxon>Rhabditidae</taxon>
        <taxon>Peloderinae</taxon>
        <taxon>Caenorhabditis</taxon>
    </lineage>
</organism>
<evidence type="ECO:0000250" key="1">
    <source>
        <dbReference type="UniProtKB" id="P02712"/>
    </source>
</evidence>
<evidence type="ECO:0000255" key="2"/>
<evidence type="ECO:0000269" key="3">
    <source>
    </source>
</evidence>
<evidence type="ECO:0000269" key="4">
    <source>
    </source>
</evidence>
<evidence type="ECO:0000269" key="5">
    <source>
    </source>
</evidence>
<evidence type="ECO:0000303" key="6">
    <source>
    </source>
</evidence>
<evidence type="ECO:0000305" key="7"/>
<evidence type="ECO:0000312" key="8">
    <source>
        <dbReference type="EMBL" id="CAH19091.1"/>
    </source>
</evidence>
<evidence type="ECO:0000312" key="9">
    <source>
        <dbReference type="WormBase" id="Y44A6E.1b"/>
    </source>
</evidence>
<comment type="function">
    <text evidence="3 4">Forms a proton-gated ion channel with pbo-6 that is activated by acidification of the posterior coelomic space, leading to posterior body wall muscle contraction (pBoc) during the defecation cycle (PubMed:18191228). Probably by regulating the defecation motor program, required for fatty acid uptake by intestinal cells (PubMed:25849533). Does not bind neurotransmitters such as acetylcholine, gamma-aminobutyric acid, glycine, serotonin, glutamate or choline (PubMed:18191228).</text>
</comment>
<comment type="subunit">
    <text evidence="3">The functional channel is a heterooligomer of pbo-5 and pbo-6. May self-associate to form homooligomers with negligible ion channel activity.</text>
</comment>
<comment type="subcellular location">
    <subcellularLocation>
        <location evidence="3">Membrane</location>
        <topology evidence="3">Multi-pass membrane protein</topology>
    </subcellularLocation>
</comment>
<comment type="alternative products">
    <event type="alternative splicing"/>
    <isoform>
        <id>G5ECT0-1</id>
        <name evidence="5">b</name>
        <sequence type="displayed"/>
    </isoform>
    <isoform>
        <id>G5ECT0-2</id>
        <name evidence="3 5">a</name>
        <sequence type="described" ref="VSP_053336"/>
    </isoform>
</comment>
<comment type="tissue specificity">
    <text evidence="3">Expressed in the posterior body muscles. Also detected in the RIFL, RIFR and RIS head neurons.</text>
</comment>
<comment type="disruption phenotype">
    <text evidence="3">Loss of posterior body wall muscle contractions (pBoc).</text>
</comment>
<comment type="similarity">
    <text evidence="2">Belongs to the ligand-gated ion channel (TC 1.A.9) family. Acetylcholine receptor (TC 1.A.9.1) subfamily.</text>
</comment>